<feature type="chain" id="PRO_0000355086" description="Small RNA degrading nuclease 3">
    <location>
        <begin position="1"/>
        <end position="782"/>
    </location>
</feature>
<feature type="domain" description="Exonuclease">
    <location>
        <begin position="145"/>
        <end position="296"/>
    </location>
</feature>
<feature type="domain" description="RRM 1">
    <location>
        <begin position="331"/>
        <end position="410"/>
    </location>
</feature>
<feature type="domain" description="RRM 2">
    <location>
        <begin position="469"/>
        <end position="549"/>
    </location>
</feature>
<feature type="domain" description="RRM 3">
    <location>
        <begin position="608"/>
        <end position="688"/>
    </location>
</feature>
<feature type="region of interest" description="Disordered" evidence="2">
    <location>
        <begin position="426"/>
        <end position="464"/>
    </location>
</feature>
<feature type="region of interest" description="Disordered" evidence="2">
    <location>
        <begin position="563"/>
        <end position="605"/>
    </location>
</feature>
<feature type="coiled-coil region" evidence="1">
    <location>
        <begin position="577"/>
        <end position="605"/>
    </location>
</feature>
<feature type="coiled-coil region" evidence="1">
    <location>
        <begin position="709"/>
        <end position="779"/>
    </location>
</feature>
<feature type="compositionally biased region" description="Basic and acidic residues" evidence="2">
    <location>
        <begin position="595"/>
        <end position="605"/>
    </location>
</feature>
<dbReference type="EC" id="3.1.-.-"/>
<dbReference type="EMBL" id="AB020742">
    <property type="protein sequence ID" value="BAB10958.1"/>
    <property type="status" value="ALT_SEQ"/>
    <property type="molecule type" value="Genomic_DNA"/>
</dbReference>
<dbReference type="EMBL" id="CP002688">
    <property type="protein sequence ID" value="AED98317.1"/>
    <property type="molecule type" value="Genomic_DNA"/>
</dbReference>
<dbReference type="EMBL" id="AY080843">
    <property type="protein sequence ID" value="AAL87318.1"/>
    <property type="molecule type" value="mRNA"/>
</dbReference>
<dbReference type="EMBL" id="BT001977">
    <property type="protein sequence ID" value="AAN71976.1"/>
    <property type="molecule type" value="mRNA"/>
</dbReference>
<dbReference type="RefSeq" id="NP_201525.2">
    <molecule id="Q8RXK2-1"/>
    <property type="nucleotide sequence ID" value="NM_126124.4"/>
</dbReference>
<dbReference type="SMR" id="Q8RXK2"/>
<dbReference type="FunCoup" id="Q8RXK2">
    <property type="interactions" value="1706"/>
</dbReference>
<dbReference type="IntAct" id="Q8RXK2">
    <property type="interactions" value="1"/>
</dbReference>
<dbReference type="STRING" id="3702.Q8RXK2"/>
<dbReference type="iPTMnet" id="Q8RXK2"/>
<dbReference type="PaxDb" id="3702-AT5G67240.1"/>
<dbReference type="ProteomicsDB" id="232969">
    <molecule id="Q8RXK2-1"/>
</dbReference>
<dbReference type="EnsemblPlants" id="AT5G67240.1">
    <molecule id="Q8RXK2-1"/>
    <property type="protein sequence ID" value="AT5G67240.1"/>
    <property type="gene ID" value="AT5G67240"/>
</dbReference>
<dbReference type="GeneID" id="836859"/>
<dbReference type="Gramene" id="AT5G67240.1">
    <molecule id="Q8RXK2-1"/>
    <property type="protein sequence ID" value="AT5G67240.1"/>
    <property type="gene ID" value="AT5G67240"/>
</dbReference>
<dbReference type="KEGG" id="ath:AT5G67240"/>
<dbReference type="Araport" id="AT5G67240"/>
<dbReference type="TAIR" id="AT5G67240">
    <property type="gene designation" value="SDN3"/>
</dbReference>
<dbReference type="eggNOG" id="KOG2248">
    <property type="taxonomic scope" value="Eukaryota"/>
</dbReference>
<dbReference type="InParanoid" id="Q8RXK2"/>
<dbReference type="OrthoDB" id="16516at2759"/>
<dbReference type="PhylomeDB" id="Q8RXK2"/>
<dbReference type="CD-CODE" id="4299E36E">
    <property type="entry name" value="Nucleolus"/>
</dbReference>
<dbReference type="PRO" id="PR:Q8RXK2"/>
<dbReference type="Proteomes" id="UP000006548">
    <property type="component" value="Chromosome 5"/>
</dbReference>
<dbReference type="ExpressionAtlas" id="Q8RXK2">
    <property type="expression patterns" value="baseline and differential"/>
</dbReference>
<dbReference type="GO" id="GO:0016592">
    <property type="term" value="C:mediator complex"/>
    <property type="evidence" value="ECO:0000314"/>
    <property type="project" value="UniProtKB"/>
</dbReference>
<dbReference type="GO" id="GO:0004527">
    <property type="term" value="F:exonuclease activity"/>
    <property type="evidence" value="ECO:0007669"/>
    <property type="project" value="UniProtKB-KW"/>
</dbReference>
<dbReference type="GO" id="GO:0003723">
    <property type="term" value="F:RNA binding"/>
    <property type="evidence" value="ECO:0007669"/>
    <property type="project" value="UniProtKB-KW"/>
</dbReference>
<dbReference type="CDD" id="cd06145">
    <property type="entry name" value="REX1_like"/>
    <property type="match status" value="1"/>
</dbReference>
<dbReference type="FunFam" id="3.30.420.10:FF:000080">
    <property type="entry name" value="Small RNA degrading nuclease 3"/>
    <property type="match status" value="1"/>
</dbReference>
<dbReference type="Gene3D" id="3.30.70.330">
    <property type="match status" value="1"/>
</dbReference>
<dbReference type="Gene3D" id="3.30.420.10">
    <property type="entry name" value="Ribonuclease H-like superfamily/Ribonuclease H"/>
    <property type="match status" value="1"/>
</dbReference>
<dbReference type="InterPro" id="IPR013520">
    <property type="entry name" value="Exonuclease_RNaseT/DNA_pol3"/>
</dbReference>
<dbReference type="InterPro" id="IPR012677">
    <property type="entry name" value="Nucleotide-bd_a/b_plait_sf"/>
</dbReference>
<dbReference type="InterPro" id="IPR035979">
    <property type="entry name" value="RBD_domain_sf"/>
</dbReference>
<dbReference type="InterPro" id="IPR034922">
    <property type="entry name" value="REX1-like_exo"/>
</dbReference>
<dbReference type="InterPro" id="IPR047021">
    <property type="entry name" value="REXO1/3/4-like"/>
</dbReference>
<dbReference type="InterPro" id="IPR012337">
    <property type="entry name" value="RNaseH-like_sf"/>
</dbReference>
<dbReference type="InterPro" id="IPR036397">
    <property type="entry name" value="RNaseH_sf"/>
</dbReference>
<dbReference type="PANTHER" id="PTHR12801">
    <property type="entry name" value="RNA EXONUCLEASE REXO1 / RECO3 FAMILY MEMBER-RELATED"/>
    <property type="match status" value="1"/>
</dbReference>
<dbReference type="PANTHER" id="PTHR12801:SF145">
    <property type="entry name" value="SMALL RNA DEGRADING NUCLEASE 1-RELATED"/>
    <property type="match status" value="1"/>
</dbReference>
<dbReference type="Pfam" id="PF00929">
    <property type="entry name" value="RNase_T"/>
    <property type="match status" value="1"/>
</dbReference>
<dbReference type="SMART" id="SM00479">
    <property type="entry name" value="EXOIII"/>
    <property type="match status" value="1"/>
</dbReference>
<dbReference type="SUPFAM" id="SSF53098">
    <property type="entry name" value="Ribonuclease H-like"/>
    <property type="match status" value="1"/>
</dbReference>
<dbReference type="SUPFAM" id="SSF54928">
    <property type="entry name" value="RNA-binding domain, RBD"/>
    <property type="match status" value="1"/>
</dbReference>
<comment type="function">
    <text>3'-5' exonuclease degrading single-stranded small RNAs.</text>
</comment>
<comment type="subunit">
    <text evidence="3">Associated with the Mediator complex.</text>
</comment>
<comment type="subcellular location">
    <subcellularLocation>
        <location evidence="5">Nucleus</location>
    </subcellularLocation>
</comment>
<comment type="alternative products">
    <event type="alternative splicing"/>
    <isoform>
        <id>Q8RXK2-1</id>
        <name>1</name>
        <sequence type="displayed"/>
    </isoform>
    <text>A number of isoforms are produced. According to EST sequences.</text>
</comment>
<comment type="disruption phenotype">
    <text evidence="4">No visible phenotype; due to the redundancy with other SDN ribonucleases. Simultaneous knockdown of SDN1, SDN2 and SDN3 results in elevated miRNA levels and pleiotropic developmental defects.</text>
</comment>
<comment type="similarity">
    <text evidence="5">Belongs to the REXO1/REXO3 family.</text>
</comment>
<comment type="sequence caution" evidence="5">
    <conflict type="erroneous gene model prediction">
        <sequence resource="EMBL-CDS" id="BAB10958"/>
    </conflict>
</comment>
<evidence type="ECO:0000255" key="1"/>
<evidence type="ECO:0000256" key="2">
    <source>
        <dbReference type="SAM" id="MobiDB-lite"/>
    </source>
</evidence>
<evidence type="ECO:0000269" key="3">
    <source>
    </source>
</evidence>
<evidence type="ECO:0000269" key="4">
    <source>
    </source>
</evidence>
<evidence type="ECO:0000305" key="5"/>
<gene>
    <name type="primary">SDN3</name>
    <name type="ordered locus">At5g67240</name>
    <name type="ORF">K21H1.20</name>
</gene>
<accession>Q8RXK2</accession>
<accession>Q9FH89</accession>
<organism>
    <name type="scientific">Arabidopsis thaliana</name>
    <name type="common">Mouse-ear cress</name>
    <dbReference type="NCBI Taxonomy" id="3702"/>
    <lineage>
        <taxon>Eukaryota</taxon>
        <taxon>Viridiplantae</taxon>
        <taxon>Streptophyta</taxon>
        <taxon>Embryophyta</taxon>
        <taxon>Tracheophyta</taxon>
        <taxon>Spermatophyta</taxon>
        <taxon>Magnoliopsida</taxon>
        <taxon>eudicotyledons</taxon>
        <taxon>Gunneridae</taxon>
        <taxon>Pentapetalae</taxon>
        <taxon>rosids</taxon>
        <taxon>malvids</taxon>
        <taxon>Brassicales</taxon>
        <taxon>Brassicaceae</taxon>
        <taxon>Camelineae</taxon>
        <taxon>Arabidopsis</taxon>
    </lineage>
</organism>
<name>SDN3_ARATH</name>
<sequence>MEHKLATAEKKLLVDLVKLVQKRGLEGENGGWKEFLNVYDKKLGSSLSDPARRSNDVLVAFLLTFKKKEDLQLIARVMQCGANRELIEKFKQETPDKETPEQRLVRLTITHDDYPGNYTFPSYAEDWYVTELGKKKSKVIKSTRMLSIDCEMVTCEDGSQALVRVGAVDRDLKVVLDKFVKPDKPVIDYKTDITGVTAEDLERATLSVADIQKKLRRFLSVGTILVGHGLHNDLQVLRIDHARVIDTSYVFEFVDAPKTQRPSLNNLCKSVLGQEVRMDGAAHNCVHDAAAAMKLVLAAVEKGAATLIQPTEEMMVAEKRRQEARQEAGKAQLFLHKIPHDVPSEELHGVLSGNFTLVVKPPKTGGYSTAVVDFSSPEEANEAFENVEGDVAKDKSGLPQKKAVLKLSSGLAVSLFVRKMVQDDSPCEISTSERARAEENNVSSKRQKTEDETEETKEATVNQREADKTKLFLHKIPHDVPSQELHGVLNGDFTLDVKPPKRKGGYYNAVVDFNSPEEANEAFENVEGDVVKDKTGLPQKMVVFKLSSGSGVSLYVRKMVHDDSPGEISTTKRARTEESNMSSKRQKTEDESEETKEANAKQREADKTKLLLHKIPLNVPSQELKVVITGQFTLEVMPPKRKGRYYNAVVTFNSPEEANKAFEKVKGEAVKEKGGLAQKMVAFKLSSGSGACLYVRKMVQDESEETKEANANHCEDDHLKEMEELKEKLKAMEFAISCEGHSKEIEELKQKLNAKEHQIQAQDKIIANLKMKLEKKQSKSRS</sequence>
<proteinExistence type="evidence at protein level"/>
<keyword id="KW-0025">Alternative splicing</keyword>
<keyword id="KW-0175">Coiled coil</keyword>
<keyword id="KW-0269">Exonuclease</keyword>
<keyword id="KW-0378">Hydrolase</keyword>
<keyword id="KW-0540">Nuclease</keyword>
<keyword id="KW-0539">Nucleus</keyword>
<keyword id="KW-1185">Reference proteome</keyword>
<keyword id="KW-0677">Repeat</keyword>
<keyword id="KW-0694">RNA-binding</keyword>
<keyword id="KW-0804">Transcription</keyword>
<keyword id="KW-0805">Transcription regulation</keyword>
<reference key="1">
    <citation type="journal article" date="2000" name="DNA Res.">
        <title>Structural analysis of Arabidopsis thaliana chromosome 5. X. Sequence features of the regions of 3,076,755 bp covered by sixty P1 and TAC clones.</title>
        <authorList>
            <person name="Sato S."/>
            <person name="Nakamura Y."/>
            <person name="Kaneko T."/>
            <person name="Katoh T."/>
            <person name="Asamizu E."/>
            <person name="Kotani H."/>
            <person name="Tabata S."/>
        </authorList>
    </citation>
    <scope>NUCLEOTIDE SEQUENCE [LARGE SCALE GENOMIC DNA]</scope>
    <source>
        <strain>cv. Columbia</strain>
    </source>
</reference>
<reference key="2">
    <citation type="journal article" date="2017" name="Plant J.">
        <title>Araport11: a complete reannotation of the Arabidopsis thaliana reference genome.</title>
        <authorList>
            <person name="Cheng C.Y."/>
            <person name="Krishnakumar V."/>
            <person name="Chan A.P."/>
            <person name="Thibaud-Nissen F."/>
            <person name="Schobel S."/>
            <person name="Town C.D."/>
        </authorList>
    </citation>
    <scope>GENOME REANNOTATION</scope>
    <source>
        <strain>cv. Columbia</strain>
    </source>
</reference>
<reference key="3">
    <citation type="journal article" date="2003" name="Science">
        <title>Empirical analysis of transcriptional activity in the Arabidopsis genome.</title>
        <authorList>
            <person name="Yamada K."/>
            <person name="Lim J."/>
            <person name="Dale J.M."/>
            <person name="Chen H."/>
            <person name="Shinn P."/>
            <person name="Palm C.J."/>
            <person name="Southwick A.M."/>
            <person name="Wu H.C."/>
            <person name="Kim C.J."/>
            <person name="Nguyen M."/>
            <person name="Pham P.K."/>
            <person name="Cheuk R.F."/>
            <person name="Karlin-Newmann G."/>
            <person name="Liu S.X."/>
            <person name="Lam B."/>
            <person name="Sakano H."/>
            <person name="Wu T."/>
            <person name="Yu G."/>
            <person name="Miranda M."/>
            <person name="Quach H.L."/>
            <person name="Tripp M."/>
            <person name="Chang C.H."/>
            <person name="Lee J.M."/>
            <person name="Toriumi M.J."/>
            <person name="Chan M.M."/>
            <person name="Tang C.C."/>
            <person name="Onodera C.S."/>
            <person name="Deng J.M."/>
            <person name="Akiyama K."/>
            <person name="Ansari Y."/>
            <person name="Arakawa T."/>
            <person name="Banh J."/>
            <person name="Banno F."/>
            <person name="Bowser L."/>
            <person name="Brooks S.Y."/>
            <person name="Carninci P."/>
            <person name="Chao Q."/>
            <person name="Choy N."/>
            <person name="Enju A."/>
            <person name="Goldsmith A.D."/>
            <person name="Gurjal M."/>
            <person name="Hansen N.F."/>
            <person name="Hayashizaki Y."/>
            <person name="Johnson-Hopson C."/>
            <person name="Hsuan V.W."/>
            <person name="Iida K."/>
            <person name="Karnes M."/>
            <person name="Khan S."/>
            <person name="Koesema E."/>
            <person name="Ishida J."/>
            <person name="Jiang P.X."/>
            <person name="Jones T."/>
            <person name="Kawai J."/>
            <person name="Kamiya A."/>
            <person name="Meyers C."/>
            <person name="Nakajima M."/>
            <person name="Narusaka M."/>
            <person name="Seki M."/>
            <person name="Sakurai T."/>
            <person name="Satou M."/>
            <person name="Tamse R."/>
            <person name="Vaysberg M."/>
            <person name="Wallender E.K."/>
            <person name="Wong C."/>
            <person name="Yamamura Y."/>
            <person name="Yuan S."/>
            <person name="Shinozaki K."/>
            <person name="Davis R.W."/>
            <person name="Theologis A."/>
            <person name="Ecker J.R."/>
        </authorList>
    </citation>
    <scope>NUCLEOTIDE SEQUENCE [LARGE SCALE MRNA]</scope>
    <source>
        <strain>cv. Columbia</strain>
    </source>
</reference>
<reference key="4">
    <citation type="journal article" date="2007" name="Mol. Cell">
        <title>Purification of a plant mediator from Arabidopsis thaliana identifies PFT1 as the Med25 subunit.</title>
        <authorList>
            <person name="Baeckstroem S."/>
            <person name="Elfving N."/>
            <person name="Nilsson R."/>
            <person name="Wingsle G."/>
            <person name="Bjoerklund S."/>
        </authorList>
    </citation>
    <scope>IDENTIFICATION BY MASS SPECTROMETRY</scope>
    <scope>SUBUNIT</scope>
</reference>
<reference key="5">
    <citation type="journal article" date="2008" name="Science">
        <title>Degradation of microRNAs by a family of exoribonucleases in Arabidopsis.</title>
        <authorList>
            <person name="Ramachandran V."/>
            <person name="Chen X."/>
        </authorList>
    </citation>
    <scope>IDENTIFICATION</scope>
    <scope>DISRUPTION PHENOTYPE</scope>
</reference>
<protein>
    <recommendedName>
        <fullName>Small RNA degrading nuclease 3</fullName>
        <ecNumber>3.1.-.-</ecNumber>
    </recommendedName>
</protein>